<sequence length="509" mass="54970">MDIRAAEISAILKEQIKNFGKEAEVSEVGQVLSVGDGIARVYGLDNVQAGEMVEFPGGIRGMALNLESDNVGVVIFGADRDIKEGDVVKRTGAIVDVPVGPELLGRVVDALGNPIDGKGPIKAKERRRVDVKAPGIIPRKSVHEPMSTGLKAIDALIPVGRGQRELVIGDRQTGKTAIILDTFLNQKPIHDNGPDKDKLYCVYVAVGQKRSTVAQFVKVLEERGALEYSIVVAATASDPAPMQYLAPFAGCAMGEYFRDNGQHALIGYDDLSKQAVAYRQMSLLLRRPPGREAYPGDVFYLHSRLLERAAKLNDENGAGSLTALPVIETQGNDVSAFIPTNVISITDGQIFLETNLFYQGIRPAVNVGLSVSRVGSSAQIKAMKQVAGSIKGELAQYREMAAFAQFGSDLDAATQRLLNRGARLTELLKQPQFSPLKTEEQVAVIYAGVNGYLDKLAVNQVGKFEEGLLASLRTEHKDVLEGIRNEKALTDDLKAKLKAAIDAFAKSFV</sequence>
<gene>
    <name evidence="1" type="primary">atpA</name>
    <name type="ordered locus">BAbS19_I16900</name>
</gene>
<keyword id="KW-0066">ATP synthesis</keyword>
<keyword id="KW-0067">ATP-binding</keyword>
<keyword id="KW-0997">Cell inner membrane</keyword>
<keyword id="KW-1003">Cell membrane</keyword>
<keyword id="KW-0139">CF(1)</keyword>
<keyword id="KW-0375">Hydrogen ion transport</keyword>
<keyword id="KW-0406">Ion transport</keyword>
<keyword id="KW-0472">Membrane</keyword>
<keyword id="KW-0547">Nucleotide-binding</keyword>
<keyword id="KW-1278">Translocase</keyword>
<keyword id="KW-0813">Transport</keyword>
<proteinExistence type="inferred from homology"/>
<feature type="chain" id="PRO_1000143347" description="ATP synthase subunit alpha">
    <location>
        <begin position="1"/>
        <end position="509"/>
    </location>
</feature>
<feature type="binding site" evidence="1">
    <location>
        <begin position="169"/>
        <end position="176"/>
    </location>
    <ligand>
        <name>ATP</name>
        <dbReference type="ChEBI" id="CHEBI:30616"/>
    </ligand>
</feature>
<feature type="site" description="Required for activity" evidence="1">
    <location>
        <position position="370"/>
    </location>
</feature>
<organism>
    <name type="scientific">Brucella abortus (strain S19)</name>
    <dbReference type="NCBI Taxonomy" id="430066"/>
    <lineage>
        <taxon>Bacteria</taxon>
        <taxon>Pseudomonadati</taxon>
        <taxon>Pseudomonadota</taxon>
        <taxon>Alphaproteobacteria</taxon>
        <taxon>Hyphomicrobiales</taxon>
        <taxon>Brucellaceae</taxon>
        <taxon>Brucella/Ochrobactrum group</taxon>
        <taxon>Brucella</taxon>
    </lineage>
</organism>
<evidence type="ECO:0000255" key="1">
    <source>
        <dbReference type="HAMAP-Rule" id="MF_01346"/>
    </source>
</evidence>
<comment type="function">
    <text evidence="1">Produces ATP from ADP in the presence of a proton gradient across the membrane. The alpha chain is a regulatory subunit.</text>
</comment>
<comment type="catalytic activity">
    <reaction evidence="1">
        <text>ATP + H2O + 4 H(+)(in) = ADP + phosphate + 5 H(+)(out)</text>
        <dbReference type="Rhea" id="RHEA:57720"/>
        <dbReference type="ChEBI" id="CHEBI:15377"/>
        <dbReference type="ChEBI" id="CHEBI:15378"/>
        <dbReference type="ChEBI" id="CHEBI:30616"/>
        <dbReference type="ChEBI" id="CHEBI:43474"/>
        <dbReference type="ChEBI" id="CHEBI:456216"/>
        <dbReference type="EC" id="7.1.2.2"/>
    </reaction>
</comment>
<comment type="subunit">
    <text evidence="1">F-type ATPases have 2 components, CF(1) - the catalytic core - and CF(0) - the membrane proton channel. CF(1) has five subunits: alpha(3), beta(3), gamma(1), delta(1), epsilon(1). CF(0) has three main subunits: a(1), b(2) and c(9-12). The alpha and beta chains form an alternating ring which encloses part of the gamma chain. CF(1) is attached to CF(0) by a central stalk formed by the gamma and epsilon chains, while a peripheral stalk is formed by the delta and b chains.</text>
</comment>
<comment type="subcellular location">
    <subcellularLocation>
        <location evidence="1">Cell inner membrane</location>
        <topology evidence="1">Peripheral membrane protein</topology>
    </subcellularLocation>
</comment>
<comment type="similarity">
    <text evidence="1">Belongs to the ATPase alpha/beta chains family.</text>
</comment>
<name>ATPA_BRUA1</name>
<reference key="1">
    <citation type="journal article" date="2008" name="PLoS ONE">
        <title>Genome sequence of Brucella abortus vaccine strain S19 compared to virulent strains yields candidate virulence genes.</title>
        <authorList>
            <person name="Crasta O.R."/>
            <person name="Folkerts O."/>
            <person name="Fei Z."/>
            <person name="Mane S.P."/>
            <person name="Evans C."/>
            <person name="Martino-Catt S."/>
            <person name="Bricker B."/>
            <person name="Yu G."/>
            <person name="Du L."/>
            <person name="Sobral B.W."/>
        </authorList>
    </citation>
    <scope>NUCLEOTIDE SEQUENCE [LARGE SCALE GENOMIC DNA]</scope>
    <source>
        <strain>S19</strain>
    </source>
</reference>
<accession>B2S7M5</accession>
<dbReference type="EC" id="7.1.2.2" evidence="1"/>
<dbReference type="EMBL" id="CP000887">
    <property type="protein sequence ID" value="ACD73172.1"/>
    <property type="molecule type" value="Genomic_DNA"/>
</dbReference>
<dbReference type="RefSeq" id="WP_002964878.1">
    <property type="nucleotide sequence ID" value="NC_010742.1"/>
</dbReference>
<dbReference type="SMR" id="B2S7M5"/>
<dbReference type="GeneID" id="93017859"/>
<dbReference type="KEGG" id="bmc:BAbS19_I16900"/>
<dbReference type="HOGENOM" id="CLU_010091_2_1_5"/>
<dbReference type="Proteomes" id="UP000002565">
    <property type="component" value="Chromosome 1"/>
</dbReference>
<dbReference type="GO" id="GO:0005886">
    <property type="term" value="C:plasma membrane"/>
    <property type="evidence" value="ECO:0007669"/>
    <property type="project" value="UniProtKB-SubCell"/>
</dbReference>
<dbReference type="GO" id="GO:0045259">
    <property type="term" value="C:proton-transporting ATP synthase complex"/>
    <property type="evidence" value="ECO:0007669"/>
    <property type="project" value="UniProtKB-KW"/>
</dbReference>
<dbReference type="GO" id="GO:0043531">
    <property type="term" value="F:ADP binding"/>
    <property type="evidence" value="ECO:0007669"/>
    <property type="project" value="TreeGrafter"/>
</dbReference>
<dbReference type="GO" id="GO:0005524">
    <property type="term" value="F:ATP binding"/>
    <property type="evidence" value="ECO:0007669"/>
    <property type="project" value="UniProtKB-UniRule"/>
</dbReference>
<dbReference type="GO" id="GO:0046933">
    <property type="term" value="F:proton-transporting ATP synthase activity, rotational mechanism"/>
    <property type="evidence" value="ECO:0007669"/>
    <property type="project" value="UniProtKB-UniRule"/>
</dbReference>
<dbReference type="CDD" id="cd18113">
    <property type="entry name" value="ATP-synt_F1_alpha_C"/>
    <property type="match status" value="1"/>
</dbReference>
<dbReference type="CDD" id="cd18116">
    <property type="entry name" value="ATP-synt_F1_alpha_N"/>
    <property type="match status" value="1"/>
</dbReference>
<dbReference type="CDD" id="cd01132">
    <property type="entry name" value="F1-ATPase_alpha_CD"/>
    <property type="match status" value="1"/>
</dbReference>
<dbReference type="FunFam" id="1.20.150.20:FF:000001">
    <property type="entry name" value="ATP synthase subunit alpha"/>
    <property type="match status" value="1"/>
</dbReference>
<dbReference type="FunFam" id="2.40.30.20:FF:000001">
    <property type="entry name" value="ATP synthase subunit alpha"/>
    <property type="match status" value="1"/>
</dbReference>
<dbReference type="FunFam" id="3.40.50.300:FF:002432">
    <property type="entry name" value="ATP synthase subunit alpha, mitochondrial"/>
    <property type="match status" value="1"/>
</dbReference>
<dbReference type="Gene3D" id="2.40.30.20">
    <property type="match status" value="1"/>
</dbReference>
<dbReference type="Gene3D" id="1.20.150.20">
    <property type="entry name" value="ATP synthase alpha/beta chain, C-terminal domain"/>
    <property type="match status" value="1"/>
</dbReference>
<dbReference type="Gene3D" id="3.40.50.300">
    <property type="entry name" value="P-loop containing nucleotide triphosphate hydrolases"/>
    <property type="match status" value="1"/>
</dbReference>
<dbReference type="HAMAP" id="MF_01346">
    <property type="entry name" value="ATP_synth_alpha_bact"/>
    <property type="match status" value="1"/>
</dbReference>
<dbReference type="InterPro" id="IPR023366">
    <property type="entry name" value="ATP_synth_asu-like_sf"/>
</dbReference>
<dbReference type="InterPro" id="IPR000793">
    <property type="entry name" value="ATP_synth_asu_C"/>
</dbReference>
<dbReference type="InterPro" id="IPR038376">
    <property type="entry name" value="ATP_synth_asu_C_sf"/>
</dbReference>
<dbReference type="InterPro" id="IPR033732">
    <property type="entry name" value="ATP_synth_F1_a_nt-bd_dom"/>
</dbReference>
<dbReference type="InterPro" id="IPR005294">
    <property type="entry name" value="ATP_synth_F1_asu"/>
</dbReference>
<dbReference type="InterPro" id="IPR020003">
    <property type="entry name" value="ATPase_a/bsu_AS"/>
</dbReference>
<dbReference type="InterPro" id="IPR004100">
    <property type="entry name" value="ATPase_F1/V1/A1_a/bsu_N"/>
</dbReference>
<dbReference type="InterPro" id="IPR036121">
    <property type="entry name" value="ATPase_F1/V1/A1_a/bsu_N_sf"/>
</dbReference>
<dbReference type="InterPro" id="IPR000194">
    <property type="entry name" value="ATPase_F1/V1/A1_a/bsu_nucl-bd"/>
</dbReference>
<dbReference type="InterPro" id="IPR027417">
    <property type="entry name" value="P-loop_NTPase"/>
</dbReference>
<dbReference type="NCBIfam" id="TIGR00962">
    <property type="entry name" value="atpA"/>
    <property type="match status" value="1"/>
</dbReference>
<dbReference type="NCBIfam" id="NF009884">
    <property type="entry name" value="PRK13343.1"/>
    <property type="match status" value="1"/>
</dbReference>
<dbReference type="PANTHER" id="PTHR48082">
    <property type="entry name" value="ATP SYNTHASE SUBUNIT ALPHA, MITOCHONDRIAL"/>
    <property type="match status" value="1"/>
</dbReference>
<dbReference type="PANTHER" id="PTHR48082:SF2">
    <property type="entry name" value="ATP SYNTHASE SUBUNIT ALPHA, MITOCHONDRIAL"/>
    <property type="match status" value="1"/>
</dbReference>
<dbReference type="Pfam" id="PF00006">
    <property type="entry name" value="ATP-synt_ab"/>
    <property type="match status" value="1"/>
</dbReference>
<dbReference type="Pfam" id="PF00306">
    <property type="entry name" value="ATP-synt_ab_C"/>
    <property type="match status" value="1"/>
</dbReference>
<dbReference type="Pfam" id="PF02874">
    <property type="entry name" value="ATP-synt_ab_N"/>
    <property type="match status" value="1"/>
</dbReference>
<dbReference type="PIRSF" id="PIRSF039088">
    <property type="entry name" value="F_ATPase_subunit_alpha"/>
    <property type="match status" value="1"/>
</dbReference>
<dbReference type="SUPFAM" id="SSF47917">
    <property type="entry name" value="C-terminal domain of alpha and beta subunits of F1 ATP synthase"/>
    <property type="match status" value="1"/>
</dbReference>
<dbReference type="SUPFAM" id="SSF50615">
    <property type="entry name" value="N-terminal domain of alpha and beta subunits of F1 ATP synthase"/>
    <property type="match status" value="1"/>
</dbReference>
<dbReference type="SUPFAM" id="SSF52540">
    <property type="entry name" value="P-loop containing nucleoside triphosphate hydrolases"/>
    <property type="match status" value="1"/>
</dbReference>
<dbReference type="PROSITE" id="PS00152">
    <property type="entry name" value="ATPASE_ALPHA_BETA"/>
    <property type="match status" value="1"/>
</dbReference>
<protein>
    <recommendedName>
        <fullName evidence="1">ATP synthase subunit alpha</fullName>
        <ecNumber evidence="1">7.1.2.2</ecNumber>
    </recommendedName>
    <alternativeName>
        <fullName evidence="1">ATP synthase F1 sector subunit alpha</fullName>
    </alternativeName>
    <alternativeName>
        <fullName evidence="1">F-ATPase subunit alpha</fullName>
    </alternativeName>
</protein>